<accession>Q1D6N0</accession>
<keyword id="KW-0067">ATP-binding</keyword>
<keyword id="KW-0963">Cytoplasm</keyword>
<keyword id="KW-1015">Disulfide bond</keyword>
<keyword id="KW-0547">Nucleotide-binding</keyword>
<keyword id="KW-1185">Reference proteome</keyword>
<keyword id="KW-0694">RNA-binding</keyword>
<keyword id="KW-0808">Transferase</keyword>
<keyword id="KW-0819">tRNA processing</keyword>
<keyword id="KW-0820">tRNA-binding</keyword>
<proteinExistence type="inferred from homology"/>
<protein>
    <recommendedName>
        <fullName evidence="1">tRNA-specific 2-thiouridylase MnmA</fullName>
        <ecNumber evidence="1">2.8.1.13</ecNumber>
    </recommendedName>
</protein>
<name>MNMA_MYXXD</name>
<organism>
    <name type="scientific">Myxococcus xanthus (strain DK1622)</name>
    <dbReference type="NCBI Taxonomy" id="246197"/>
    <lineage>
        <taxon>Bacteria</taxon>
        <taxon>Pseudomonadati</taxon>
        <taxon>Myxococcota</taxon>
        <taxon>Myxococcia</taxon>
        <taxon>Myxococcales</taxon>
        <taxon>Cystobacterineae</taxon>
        <taxon>Myxococcaceae</taxon>
        <taxon>Myxococcus</taxon>
    </lineage>
</organism>
<feature type="chain" id="PRO_0000349710" description="tRNA-specific 2-thiouridylase MnmA">
    <location>
        <begin position="1"/>
        <end position="348"/>
    </location>
</feature>
<feature type="region of interest" description="Interaction with tRNA" evidence="1">
    <location>
        <begin position="144"/>
        <end position="146"/>
    </location>
</feature>
<feature type="active site" description="Nucleophile" evidence="1">
    <location>
        <position position="99"/>
    </location>
</feature>
<feature type="active site" description="Cysteine persulfide intermediate" evidence="1">
    <location>
        <position position="194"/>
    </location>
</feature>
<feature type="binding site" evidence="1">
    <location>
        <begin position="6"/>
        <end position="13"/>
    </location>
    <ligand>
        <name>ATP</name>
        <dbReference type="ChEBI" id="CHEBI:30616"/>
    </ligand>
</feature>
<feature type="binding site" evidence="1">
    <location>
        <position position="32"/>
    </location>
    <ligand>
        <name>ATP</name>
        <dbReference type="ChEBI" id="CHEBI:30616"/>
    </ligand>
</feature>
<feature type="binding site" evidence="1">
    <location>
        <position position="122"/>
    </location>
    <ligand>
        <name>ATP</name>
        <dbReference type="ChEBI" id="CHEBI:30616"/>
    </ligand>
</feature>
<feature type="site" description="Interaction with tRNA" evidence="1">
    <location>
        <position position="123"/>
    </location>
</feature>
<feature type="site" description="Interaction with tRNA" evidence="1">
    <location>
        <position position="331"/>
    </location>
</feature>
<feature type="disulfide bond" description="Alternate" evidence="1">
    <location>
        <begin position="99"/>
        <end position="194"/>
    </location>
</feature>
<gene>
    <name evidence="1" type="primary">mnmA</name>
    <name type="ordered locus">MXAN_3499</name>
</gene>
<evidence type="ECO:0000255" key="1">
    <source>
        <dbReference type="HAMAP-Rule" id="MF_00144"/>
    </source>
</evidence>
<reference key="1">
    <citation type="journal article" date="2006" name="Proc. Natl. Acad. Sci. U.S.A.">
        <title>Evolution of sensory complexity recorded in a myxobacterial genome.</title>
        <authorList>
            <person name="Goldman B.S."/>
            <person name="Nierman W.C."/>
            <person name="Kaiser D."/>
            <person name="Slater S.C."/>
            <person name="Durkin A.S."/>
            <person name="Eisen J.A."/>
            <person name="Ronning C.M."/>
            <person name="Barbazuk W.B."/>
            <person name="Blanchard M."/>
            <person name="Field C."/>
            <person name="Halling C."/>
            <person name="Hinkle G."/>
            <person name="Iartchuk O."/>
            <person name="Kim H.S."/>
            <person name="Mackenzie C."/>
            <person name="Madupu R."/>
            <person name="Miller N."/>
            <person name="Shvartsbeyn A."/>
            <person name="Sullivan S.A."/>
            <person name="Vaudin M."/>
            <person name="Wiegand R."/>
            <person name="Kaplan H.B."/>
        </authorList>
    </citation>
    <scope>NUCLEOTIDE SEQUENCE [LARGE SCALE GENOMIC DNA]</scope>
    <source>
        <strain>DK1622</strain>
    </source>
</reference>
<dbReference type="EC" id="2.8.1.13" evidence="1"/>
<dbReference type="EMBL" id="CP000113">
    <property type="protein sequence ID" value="ABF85898.1"/>
    <property type="molecule type" value="Genomic_DNA"/>
</dbReference>
<dbReference type="RefSeq" id="WP_011553529.1">
    <property type="nucleotide sequence ID" value="NC_008095.1"/>
</dbReference>
<dbReference type="SMR" id="Q1D6N0"/>
<dbReference type="STRING" id="246197.MXAN_3499"/>
<dbReference type="EnsemblBacteria" id="ABF85898">
    <property type="protein sequence ID" value="ABF85898"/>
    <property type="gene ID" value="MXAN_3499"/>
</dbReference>
<dbReference type="GeneID" id="41360844"/>
<dbReference type="KEGG" id="mxa:MXAN_3499"/>
<dbReference type="eggNOG" id="COG0482">
    <property type="taxonomic scope" value="Bacteria"/>
</dbReference>
<dbReference type="HOGENOM" id="CLU_035188_0_0_7"/>
<dbReference type="OrthoDB" id="9800696at2"/>
<dbReference type="Proteomes" id="UP000002402">
    <property type="component" value="Chromosome"/>
</dbReference>
<dbReference type="GO" id="GO:0005737">
    <property type="term" value="C:cytoplasm"/>
    <property type="evidence" value="ECO:0007669"/>
    <property type="project" value="UniProtKB-SubCell"/>
</dbReference>
<dbReference type="GO" id="GO:0005524">
    <property type="term" value="F:ATP binding"/>
    <property type="evidence" value="ECO:0007669"/>
    <property type="project" value="UniProtKB-KW"/>
</dbReference>
<dbReference type="GO" id="GO:0000049">
    <property type="term" value="F:tRNA binding"/>
    <property type="evidence" value="ECO:0007669"/>
    <property type="project" value="UniProtKB-KW"/>
</dbReference>
<dbReference type="GO" id="GO:0103016">
    <property type="term" value="F:tRNA-uridine 2-sulfurtransferase activity"/>
    <property type="evidence" value="ECO:0007669"/>
    <property type="project" value="UniProtKB-EC"/>
</dbReference>
<dbReference type="GO" id="GO:0002143">
    <property type="term" value="P:tRNA wobble position uridine thiolation"/>
    <property type="evidence" value="ECO:0007669"/>
    <property type="project" value="TreeGrafter"/>
</dbReference>
<dbReference type="CDD" id="cd01998">
    <property type="entry name" value="MnmA_TRMU-like"/>
    <property type="match status" value="1"/>
</dbReference>
<dbReference type="FunFam" id="3.40.50.620:FF:000115">
    <property type="entry name" value="tRNA-specific 2-thiouridylase MnmA"/>
    <property type="match status" value="1"/>
</dbReference>
<dbReference type="Gene3D" id="2.30.30.280">
    <property type="entry name" value="Adenine nucleotide alpha hydrolases-like domains"/>
    <property type="match status" value="1"/>
</dbReference>
<dbReference type="Gene3D" id="3.40.50.620">
    <property type="entry name" value="HUPs"/>
    <property type="match status" value="1"/>
</dbReference>
<dbReference type="Gene3D" id="2.40.30.10">
    <property type="entry name" value="Translation factors"/>
    <property type="match status" value="1"/>
</dbReference>
<dbReference type="HAMAP" id="MF_00144">
    <property type="entry name" value="tRNA_thiouridyl_MnmA"/>
    <property type="match status" value="1"/>
</dbReference>
<dbReference type="InterPro" id="IPR004506">
    <property type="entry name" value="MnmA-like"/>
</dbReference>
<dbReference type="InterPro" id="IPR046885">
    <property type="entry name" value="MnmA-like_C"/>
</dbReference>
<dbReference type="InterPro" id="IPR046884">
    <property type="entry name" value="MnmA-like_central"/>
</dbReference>
<dbReference type="InterPro" id="IPR023382">
    <property type="entry name" value="MnmA-like_central_sf"/>
</dbReference>
<dbReference type="InterPro" id="IPR014729">
    <property type="entry name" value="Rossmann-like_a/b/a_fold"/>
</dbReference>
<dbReference type="NCBIfam" id="NF001138">
    <property type="entry name" value="PRK00143.1"/>
    <property type="match status" value="1"/>
</dbReference>
<dbReference type="NCBIfam" id="TIGR00420">
    <property type="entry name" value="trmU"/>
    <property type="match status" value="1"/>
</dbReference>
<dbReference type="PANTHER" id="PTHR11933:SF5">
    <property type="entry name" value="MITOCHONDRIAL TRNA-SPECIFIC 2-THIOURIDYLASE 1"/>
    <property type="match status" value="1"/>
</dbReference>
<dbReference type="PANTHER" id="PTHR11933">
    <property type="entry name" value="TRNA 5-METHYLAMINOMETHYL-2-THIOURIDYLATE -METHYLTRANSFERASE"/>
    <property type="match status" value="1"/>
</dbReference>
<dbReference type="Pfam" id="PF03054">
    <property type="entry name" value="tRNA_Me_trans"/>
    <property type="match status" value="1"/>
</dbReference>
<dbReference type="Pfam" id="PF20258">
    <property type="entry name" value="tRNA_Me_trans_C"/>
    <property type="match status" value="1"/>
</dbReference>
<dbReference type="Pfam" id="PF20259">
    <property type="entry name" value="tRNA_Me_trans_M"/>
    <property type="match status" value="1"/>
</dbReference>
<dbReference type="SUPFAM" id="SSF52402">
    <property type="entry name" value="Adenine nucleotide alpha hydrolases-like"/>
    <property type="match status" value="1"/>
</dbReference>
<sequence>MRVVVAMSGGVDSSAAAALLKEQGHEVIGITLRVWSYEGKATCGSCCSPDDIDDARAVAQTLGIPFYVANAEEIFQDRVINPFVQSYLGGRTPIPCVACNRDVKFNFLLKRARALGARLATGHYARVEEVDGRFVLRRAVDAAKDQSYFLFTLGQDELRDILFPVGGMTKAEVRAVAERHGLVTSQKPESMEICFVPDGDYAGFVEKVAGPQPAGDIVDTEGNVLGTHQGIHRYTVGQRKGLNLGGGEIRYVHRLEPETQRVVVGPAEGTGRDNFGLLQPHWVDGPPPASQPVEVRIRHRHSGAQGRVHVSPHGLVSVKLDAPARAVTPGQAAVVYDQDRVLGGGWIV</sequence>
<comment type="function">
    <text evidence="1">Catalyzes the 2-thiolation of uridine at the wobble position (U34) of tRNA, leading to the formation of s(2)U34.</text>
</comment>
<comment type="catalytic activity">
    <reaction evidence="1">
        <text>S-sulfanyl-L-cysteinyl-[protein] + uridine(34) in tRNA + AH2 + ATP = 2-thiouridine(34) in tRNA + L-cysteinyl-[protein] + A + AMP + diphosphate + H(+)</text>
        <dbReference type="Rhea" id="RHEA:47032"/>
        <dbReference type="Rhea" id="RHEA-COMP:10131"/>
        <dbReference type="Rhea" id="RHEA-COMP:11726"/>
        <dbReference type="Rhea" id="RHEA-COMP:11727"/>
        <dbReference type="Rhea" id="RHEA-COMP:11728"/>
        <dbReference type="ChEBI" id="CHEBI:13193"/>
        <dbReference type="ChEBI" id="CHEBI:15378"/>
        <dbReference type="ChEBI" id="CHEBI:17499"/>
        <dbReference type="ChEBI" id="CHEBI:29950"/>
        <dbReference type="ChEBI" id="CHEBI:30616"/>
        <dbReference type="ChEBI" id="CHEBI:33019"/>
        <dbReference type="ChEBI" id="CHEBI:61963"/>
        <dbReference type="ChEBI" id="CHEBI:65315"/>
        <dbReference type="ChEBI" id="CHEBI:87170"/>
        <dbReference type="ChEBI" id="CHEBI:456215"/>
        <dbReference type="EC" id="2.8.1.13"/>
    </reaction>
</comment>
<comment type="subcellular location">
    <subcellularLocation>
        <location evidence="1">Cytoplasm</location>
    </subcellularLocation>
</comment>
<comment type="similarity">
    <text evidence="1">Belongs to the MnmA/TRMU family.</text>
</comment>